<accession>Q666T2</accession>
<dbReference type="EMBL" id="BX936398">
    <property type="protein sequence ID" value="CAH22402.1"/>
    <property type="molecule type" value="Genomic_DNA"/>
</dbReference>
<dbReference type="SMR" id="Q666T2"/>
<dbReference type="KEGG" id="yps:YPTB3164"/>
<dbReference type="Proteomes" id="UP000001011">
    <property type="component" value="Chromosome"/>
</dbReference>
<dbReference type="GO" id="GO:0005737">
    <property type="term" value="C:cytoplasm"/>
    <property type="evidence" value="ECO:0007669"/>
    <property type="project" value="UniProtKB-SubCell"/>
</dbReference>
<dbReference type="GO" id="GO:0016149">
    <property type="term" value="F:translation release factor activity, codon specific"/>
    <property type="evidence" value="ECO:0007669"/>
    <property type="project" value="UniProtKB-UniRule"/>
</dbReference>
<dbReference type="GO" id="GO:0075523">
    <property type="term" value="P:viral translational frameshifting"/>
    <property type="evidence" value="ECO:0007669"/>
    <property type="project" value="UniProtKB-KW"/>
</dbReference>
<dbReference type="FunFam" id="3.30.160.20:FF:000010">
    <property type="entry name" value="Peptide chain release factor 2"/>
    <property type="match status" value="1"/>
</dbReference>
<dbReference type="Gene3D" id="3.30.160.20">
    <property type="match status" value="1"/>
</dbReference>
<dbReference type="Gene3D" id="3.30.70.1660">
    <property type="match status" value="1"/>
</dbReference>
<dbReference type="Gene3D" id="1.20.58.410">
    <property type="entry name" value="Release factor"/>
    <property type="match status" value="1"/>
</dbReference>
<dbReference type="HAMAP" id="MF_00094">
    <property type="entry name" value="Rel_fac_2"/>
    <property type="match status" value="1"/>
</dbReference>
<dbReference type="InterPro" id="IPR005139">
    <property type="entry name" value="PCRF"/>
</dbReference>
<dbReference type="InterPro" id="IPR000352">
    <property type="entry name" value="Pep_chain_release_fac_I"/>
</dbReference>
<dbReference type="InterPro" id="IPR045853">
    <property type="entry name" value="Pep_chain_release_fac_I_sf"/>
</dbReference>
<dbReference type="InterPro" id="IPR004374">
    <property type="entry name" value="PrfB"/>
</dbReference>
<dbReference type="NCBIfam" id="TIGR00020">
    <property type="entry name" value="prfB"/>
    <property type="match status" value="1"/>
</dbReference>
<dbReference type="PANTHER" id="PTHR43116:SF3">
    <property type="entry name" value="CLASS I PEPTIDE CHAIN RELEASE FACTOR"/>
    <property type="match status" value="1"/>
</dbReference>
<dbReference type="PANTHER" id="PTHR43116">
    <property type="entry name" value="PEPTIDE CHAIN RELEASE FACTOR 2"/>
    <property type="match status" value="1"/>
</dbReference>
<dbReference type="Pfam" id="PF03462">
    <property type="entry name" value="PCRF"/>
    <property type="match status" value="1"/>
</dbReference>
<dbReference type="Pfam" id="PF00472">
    <property type="entry name" value="RF-1"/>
    <property type="match status" value="1"/>
</dbReference>
<dbReference type="SMART" id="SM00937">
    <property type="entry name" value="PCRF"/>
    <property type="match status" value="1"/>
</dbReference>
<dbReference type="SUPFAM" id="SSF75620">
    <property type="entry name" value="Release factor"/>
    <property type="match status" value="1"/>
</dbReference>
<dbReference type="PROSITE" id="PS00745">
    <property type="entry name" value="RF_PROK_I"/>
    <property type="match status" value="1"/>
</dbReference>
<evidence type="ECO:0000250" key="1"/>
<evidence type="ECO:0000255" key="2">
    <source>
        <dbReference type="HAMAP-Rule" id="MF_00094"/>
    </source>
</evidence>
<protein>
    <recommendedName>
        <fullName evidence="2">Peptide chain release factor 2</fullName>
        <shortName evidence="2">RF-2</shortName>
    </recommendedName>
</protein>
<feature type="chain" id="PRO_1000005024" description="Peptide chain release factor 2">
    <location>
        <begin position="1"/>
        <end position="366"/>
    </location>
</feature>
<feature type="modified residue" description="N5-methylglutamine" evidence="2">
    <location>
        <position position="253"/>
    </location>
</feature>
<reference key="1">
    <citation type="journal article" date="2004" name="Proc. Natl. Acad. Sci. U.S.A.">
        <title>Insights into the evolution of Yersinia pestis through whole-genome comparison with Yersinia pseudotuberculosis.</title>
        <authorList>
            <person name="Chain P.S.G."/>
            <person name="Carniel E."/>
            <person name="Larimer F.W."/>
            <person name="Lamerdin J."/>
            <person name="Stoutland P.O."/>
            <person name="Regala W.M."/>
            <person name="Georgescu A.M."/>
            <person name="Vergez L.M."/>
            <person name="Land M.L."/>
            <person name="Motin V.L."/>
            <person name="Brubaker R.R."/>
            <person name="Fowler J."/>
            <person name="Hinnebusch J."/>
            <person name="Marceau M."/>
            <person name="Medigue C."/>
            <person name="Simonet M."/>
            <person name="Chenal-Francisque V."/>
            <person name="Souza B."/>
            <person name="Dacheux D."/>
            <person name="Elliott J.M."/>
            <person name="Derbise A."/>
            <person name="Hauser L.J."/>
            <person name="Garcia E."/>
        </authorList>
    </citation>
    <scope>NUCLEOTIDE SEQUENCE [LARGE SCALE GENOMIC DNA]</scope>
    <source>
        <strain>IP32953</strain>
    </source>
</reference>
<name>RF2_YERPS</name>
<proteinExistence type="inferred from homology"/>
<sequence length="366" mass="41440">MFEINPVKNRIQDLSDRTAVLRGYLFDYDAKKERLEEVNAELEQPDVWNEPERAQALGKERSTLEEIVTTIDQLEQGLEDVSGLLELAVEADDEETFNETIAELEVLDGKLGQLEFRRMFSGEYDRANCYLDLQAGSGGTEAQDWASMLLRMYLRWAESRGFKTEIIEESDGDVAGLKSATVKIIGEYAFGWLRTETGVHRLVRKSPFDSGGRRHTSFSSAFVYPEVDDDIDIEINPADLRIDVYRASGAGGQHVNKTESAVRITHIPTNIVTQCQNDRSQHKNKDQAMKQLKAKLYEFEMQKKNADKQVLEDNKSDIGWGSQIRSYVLDDSRIKDLRTGVETRNTQAVLDGDLDKFIEASLKAGL</sequence>
<organism>
    <name type="scientific">Yersinia pseudotuberculosis serotype I (strain IP32953)</name>
    <dbReference type="NCBI Taxonomy" id="273123"/>
    <lineage>
        <taxon>Bacteria</taxon>
        <taxon>Pseudomonadati</taxon>
        <taxon>Pseudomonadota</taxon>
        <taxon>Gammaproteobacteria</taxon>
        <taxon>Enterobacterales</taxon>
        <taxon>Yersiniaceae</taxon>
        <taxon>Yersinia</taxon>
    </lineage>
</organism>
<gene>
    <name evidence="2" type="primary">prfB</name>
    <name type="ordered locus">YPTB3164</name>
</gene>
<keyword id="KW-0963">Cytoplasm</keyword>
<keyword id="KW-0488">Methylation</keyword>
<keyword id="KW-0648">Protein biosynthesis</keyword>
<keyword id="KW-0688">Ribosomal frameshifting</keyword>
<comment type="function">
    <text evidence="2">Peptide chain release factor 2 directs the termination of translation in response to the peptide chain termination codons UGA and UAA.</text>
</comment>
<comment type="subcellular location">
    <subcellularLocation>
        <location evidence="2">Cytoplasm</location>
    </subcellularLocation>
</comment>
<comment type="PTM">
    <text evidence="2">Methylated by PrmC. Methylation increases the termination efficiency of RF2.</text>
</comment>
<comment type="miscellaneous">
    <text evidence="1">The gene for this protein contains a UGA in-frame termination codon after Leu-25; a naturally occurring frameshift enables complete translation of RF-2. This provides a mechanism for the protein to regulate its own production (By similarity).</text>
</comment>
<comment type="similarity">
    <text evidence="2">Belongs to the prokaryotic/mitochondrial release factor family.</text>
</comment>